<gene>
    <name evidence="1" type="primary">dapE</name>
    <name type="ordered locus">Oant_1350</name>
</gene>
<reference key="1">
    <citation type="journal article" date="2011" name="J. Bacteriol.">
        <title>Genome of Ochrobactrum anthropi ATCC 49188 T, a versatile opportunistic pathogen and symbiont of several eukaryotic hosts.</title>
        <authorList>
            <person name="Chain P.S."/>
            <person name="Lang D.M."/>
            <person name="Comerci D.J."/>
            <person name="Malfatti S.A."/>
            <person name="Vergez L.M."/>
            <person name="Shin M."/>
            <person name="Ugalde R.A."/>
            <person name="Garcia E."/>
            <person name="Tolmasky M.E."/>
        </authorList>
    </citation>
    <scope>NUCLEOTIDE SEQUENCE [LARGE SCALE GENOMIC DNA]</scope>
    <source>
        <strain>ATCC 49188 / DSM 6882 / CCUG 24695 / JCM 21032 / LMG 3331 / NBRC 15819 / NCTC 12168 / Alc 37</strain>
    </source>
</reference>
<keyword id="KW-0028">Amino-acid biosynthesis</keyword>
<keyword id="KW-0170">Cobalt</keyword>
<keyword id="KW-0220">Diaminopimelate biosynthesis</keyword>
<keyword id="KW-0378">Hydrolase</keyword>
<keyword id="KW-0457">Lysine biosynthesis</keyword>
<keyword id="KW-0479">Metal-binding</keyword>
<keyword id="KW-1185">Reference proteome</keyword>
<keyword id="KW-0862">Zinc</keyword>
<name>DAPE_BRUA4</name>
<organism>
    <name type="scientific">Brucella anthropi (strain ATCC 49188 / DSM 6882 / CCUG 24695 / JCM 21032 / LMG 3331 / NBRC 15819 / NCTC 12168 / Alc 37)</name>
    <name type="common">Ochrobactrum anthropi</name>
    <dbReference type="NCBI Taxonomy" id="439375"/>
    <lineage>
        <taxon>Bacteria</taxon>
        <taxon>Pseudomonadati</taxon>
        <taxon>Pseudomonadota</taxon>
        <taxon>Alphaproteobacteria</taxon>
        <taxon>Hyphomicrobiales</taxon>
        <taxon>Brucellaceae</taxon>
        <taxon>Brucella/Ochrobactrum group</taxon>
        <taxon>Brucella</taxon>
    </lineage>
</organism>
<dbReference type="EC" id="3.5.1.18" evidence="1"/>
<dbReference type="EMBL" id="CP000758">
    <property type="protein sequence ID" value="ABS14067.1"/>
    <property type="molecule type" value="Genomic_DNA"/>
</dbReference>
<dbReference type="RefSeq" id="WP_012091440.1">
    <property type="nucleotide sequence ID" value="NC_009667.1"/>
</dbReference>
<dbReference type="SMR" id="A6WYL3"/>
<dbReference type="STRING" id="439375.Oant_1350"/>
<dbReference type="KEGG" id="oan:Oant_1350"/>
<dbReference type="PATRIC" id="fig|439375.7.peg.1415"/>
<dbReference type="eggNOG" id="COG0624">
    <property type="taxonomic scope" value="Bacteria"/>
</dbReference>
<dbReference type="HOGENOM" id="CLU_021802_4_0_5"/>
<dbReference type="PhylomeDB" id="A6WYL3"/>
<dbReference type="UniPathway" id="UPA00034">
    <property type="reaction ID" value="UER00021"/>
</dbReference>
<dbReference type="Proteomes" id="UP000002301">
    <property type="component" value="Chromosome 1"/>
</dbReference>
<dbReference type="GO" id="GO:0008777">
    <property type="term" value="F:acetylornithine deacetylase activity"/>
    <property type="evidence" value="ECO:0007669"/>
    <property type="project" value="TreeGrafter"/>
</dbReference>
<dbReference type="GO" id="GO:0050897">
    <property type="term" value="F:cobalt ion binding"/>
    <property type="evidence" value="ECO:0007669"/>
    <property type="project" value="UniProtKB-UniRule"/>
</dbReference>
<dbReference type="GO" id="GO:0009014">
    <property type="term" value="F:succinyl-diaminopimelate desuccinylase activity"/>
    <property type="evidence" value="ECO:0007669"/>
    <property type="project" value="UniProtKB-UniRule"/>
</dbReference>
<dbReference type="GO" id="GO:0008270">
    <property type="term" value="F:zinc ion binding"/>
    <property type="evidence" value="ECO:0007669"/>
    <property type="project" value="UniProtKB-UniRule"/>
</dbReference>
<dbReference type="GO" id="GO:0019877">
    <property type="term" value="P:diaminopimelate biosynthetic process"/>
    <property type="evidence" value="ECO:0007669"/>
    <property type="project" value="UniProtKB-UniRule"/>
</dbReference>
<dbReference type="GO" id="GO:0006526">
    <property type="term" value="P:L-arginine biosynthetic process"/>
    <property type="evidence" value="ECO:0007669"/>
    <property type="project" value="TreeGrafter"/>
</dbReference>
<dbReference type="GO" id="GO:0009089">
    <property type="term" value="P:lysine biosynthetic process via diaminopimelate"/>
    <property type="evidence" value="ECO:0007669"/>
    <property type="project" value="UniProtKB-UniRule"/>
</dbReference>
<dbReference type="CDD" id="cd03891">
    <property type="entry name" value="M20_DapE_proteobac"/>
    <property type="match status" value="1"/>
</dbReference>
<dbReference type="Gene3D" id="3.30.70.360">
    <property type="match status" value="1"/>
</dbReference>
<dbReference type="Gene3D" id="3.40.630.10">
    <property type="entry name" value="Zn peptidases"/>
    <property type="match status" value="2"/>
</dbReference>
<dbReference type="HAMAP" id="MF_01690">
    <property type="entry name" value="DapE"/>
    <property type="match status" value="1"/>
</dbReference>
<dbReference type="InterPro" id="IPR001261">
    <property type="entry name" value="ArgE/DapE_CS"/>
</dbReference>
<dbReference type="InterPro" id="IPR036264">
    <property type="entry name" value="Bact_exopeptidase_dim_dom"/>
</dbReference>
<dbReference type="InterPro" id="IPR005941">
    <property type="entry name" value="DapE_proteobac"/>
</dbReference>
<dbReference type="InterPro" id="IPR002933">
    <property type="entry name" value="Peptidase_M20"/>
</dbReference>
<dbReference type="InterPro" id="IPR011650">
    <property type="entry name" value="Peptidase_M20_dimer"/>
</dbReference>
<dbReference type="InterPro" id="IPR050072">
    <property type="entry name" value="Peptidase_M20A"/>
</dbReference>
<dbReference type="NCBIfam" id="TIGR01246">
    <property type="entry name" value="dapE_proteo"/>
    <property type="match status" value="1"/>
</dbReference>
<dbReference type="NCBIfam" id="NF009557">
    <property type="entry name" value="PRK13009.1"/>
    <property type="match status" value="1"/>
</dbReference>
<dbReference type="PANTHER" id="PTHR43808">
    <property type="entry name" value="ACETYLORNITHINE DEACETYLASE"/>
    <property type="match status" value="1"/>
</dbReference>
<dbReference type="PANTHER" id="PTHR43808:SF31">
    <property type="entry name" value="N-ACETYL-L-CITRULLINE DEACETYLASE"/>
    <property type="match status" value="1"/>
</dbReference>
<dbReference type="Pfam" id="PF07687">
    <property type="entry name" value="M20_dimer"/>
    <property type="match status" value="1"/>
</dbReference>
<dbReference type="Pfam" id="PF01546">
    <property type="entry name" value="Peptidase_M20"/>
    <property type="match status" value="1"/>
</dbReference>
<dbReference type="SUPFAM" id="SSF55031">
    <property type="entry name" value="Bacterial exopeptidase dimerisation domain"/>
    <property type="match status" value="1"/>
</dbReference>
<dbReference type="SUPFAM" id="SSF53187">
    <property type="entry name" value="Zn-dependent exopeptidases"/>
    <property type="match status" value="1"/>
</dbReference>
<dbReference type="PROSITE" id="PS00758">
    <property type="entry name" value="ARGE_DAPE_CPG2_1"/>
    <property type="match status" value="1"/>
</dbReference>
<dbReference type="PROSITE" id="PS00759">
    <property type="entry name" value="ARGE_DAPE_CPG2_2"/>
    <property type="match status" value="1"/>
</dbReference>
<proteinExistence type="inferred from homology"/>
<sequence>MSLAVNPADNLAALIRCASVTPAEGGALTALEAMLKPMGFSVERPVFHDEDTPDIENLYARKSGNGPHLMFAGHTDVVPPGNEGDWKHPPFSAAIEDGVMYGRGAVDMKGGVACFVAAVARHIEKHGSIKGSVSFLITGDEEGPAINGTVKLLDWAKQRGESWDASIVGEPSNPNALGDAIKIGRRGSLSGTITVHGVQGHAAYPHLAENPVRGITTLVDSLLYPAFDQGTANFQASNLEVTSIDVGNKATNVIANKATASFNIRFNDTWTAETLQAEIIARLEKAARDNRLRPGRETPIKYELTWREHPSHVFLTRDEKLIGTLTDSVEAVTGKRPELSTSGGTSDARFIKDYCPVVEFGLVGQTMHMVDERVALADLEGLTQIYERFIADFFG</sequence>
<evidence type="ECO:0000255" key="1">
    <source>
        <dbReference type="HAMAP-Rule" id="MF_01690"/>
    </source>
</evidence>
<feature type="chain" id="PRO_0000375635" description="Succinyl-diaminopimelate desuccinylase">
    <location>
        <begin position="1"/>
        <end position="395"/>
    </location>
</feature>
<feature type="active site" evidence="1">
    <location>
        <position position="76"/>
    </location>
</feature>
<feature type="active site" description="Proton acceptor" evidence="1">
    <location>
        <position position="141"/>
    </location>
</feature>
<feature type="binding site" evidence="1">
    <location>
        <position position="74"/>
    </location>
    <ligand>
        <name>Zn(2+)</name>
        <dbReference type="ChEBI" id="CHEBI:29105"/>
        <label>1</label>
    </ligand>
</feature>
<feature type="binding site" evidence="1">
    <location>
        <position position="107"/>
    </location>
    <ligand>
        <name>Zn(2+)</name>
        <dbReference type="ChEBI" id="CHEBI:29105"/>
        <label>1</label>
    </ligand>
</feature>
<feature type="binding site" evidence="1">
    <location>
        <position position="107"/>
    </location>
    <ligand>
        <name>Zn(2+)</name>
        <dbReference type="ChEBI" id="CHEBI:29105"/>
        <label>2</label>
    </ligand>
</feature>
<feature type="binding site" evidence="1">
    <location>
        <position position="142"/>
    </location>
    <ligand>
        <name>Zn(2+)</name>
        <dbReference type="ChEBI" id="CHEBI:29105"/>
        <label>2</label>
    </ligand>
</feature>
<feature type="binding site" evidence="1">
    <location>
        <position position="170"/>
    </location>
    <ligand>
        <name>Zn(2+)</name>
        <dbReference type="ChEBI" id="CHEBI:29105"/>
        <label>1</label>
    </ligand>
</feature>
<feature type="binding site" evidence="1">
    <location>
        <position position="368"/>
    </location>
    <ligand>
        <name>Zn(2+)</name>
        <dbReference type="ChEBI" id="CHEBI:29105"/>
        <label>2</label>
    </ligand>
</feature>
<protein>
    <recommendedName>
        <fullName evidence="1">Succinyl-diaminopimelate desuccinylase</fullName>
        <shortName evidence="1">SDAP desuccinylase</shortName>
        <ecNumber evidence="1">3.5.1.18</ecNumber>
    </recommendedName>
    <alternativeName>
        <fullName evidence="1">N-succinyl-LL-2,6-diaminoheptanedioate amidohydrolase</fullName>
    </alternativeName>
</protein>
<accession>A6WYL3</accession>
<comment type="function">
    <text evidence="1">Catalyzes the hydrolysis of N-succinyl-L,L-diaminopimelic acid (SDAP), forming succinate and LL-2,6-diaminopimelate (DAP), an intermediate involved in the bacterial biosynthesis of lysine and meso-diaminopimelic acid, an essential component of bacterial cell walls.</text>
</comment>
<comment type="catalytic activity">
    <reaction evidence="1">
        <text>N-succinyl-(2S,6S)-2,6-diaminopimelate + H2O = (2S,6S)-2,6-diaminopimelate + succinate</text>
        <dbReference type="Rhea" id="RHEA:22608"/>
        <dbReference type="ChEBI" id="CHEBI:15377"/>
        <dbReference type="ChEBI" id="CHEBI:30031"/>
        <dbReference type="ChEBI" id="CHEBI:57609"/>
        <dbReference type="ChEBI" id="CHEBI:58087"/>
        <dbReference type="EC" id="3.5.1.18"/>
    </reaction>
</comment>
<comment type="cofactor">
    <cofactor evidence="1">
        <name>Zn(2+)</name>
        <dbReference type="ChEBI" id="CHEBI:29105"/>
    </cofactor>
    <cofactor evidence="1">
        <name>Co(2+)</name>
        <dbReference type="ChEBI" id="CHEBI:48828"/>
    </cofactor>
    <text evidence="1">Binds 2 Zn(2+) or Co(2+) ions per subunit.</text>
</comment>
<comment type="pathway">
    <text evidence="1">Amino-acid biosynthesis; L-lysine biosynthesis via DAP pathway; LL-2,6-diaminopimelate from (S)-tetrahydrodipicolinate (succinylase route): step 3/3.</text>
</comment>
<comment type="subunit">
    <text evidence="1">Homodimer.</text>
</comment>
<comment type="similarity">
    <text evidence="1">Belongs to the peptidase M20A family. DapE subfamily.</text>
</comment>